<organism>
    <name type="scientific">Centruroides noxius</name>
    <name type="common">Mexican scorpion</name>
    <dbReference type="NCBI Taxonomy" id="6878"/>
    <lineage>
        <taxon>Eukaryota</taxon>
        <taxon>Metazoa</taxon>
        <taxon>Ecdysozoa</taxon>
        <taxon>Arthropoda</taxon>
        <taxon>Chelicerata</taxon>
        <taxon>Arachnida</taxon>
        <taxon>Scorpiones</taxon>
        <taxon>Buthida</taxon>
        <taxon>Buthoidea</taxon>
        <taxon>Buthidae</taxon>
        <taxon>Centruroides</taxon>
    </lineage>
</organism>
<keyword id="KW-0002">3D-structure</keyword>
<keyword id="KW-0027">Amidation</keyword>
<keyword id="KW-1221">Calcium-activated potassium channel impairing toxin</keyword>
<keyword id="KW-0903">Direct protein sequencing</keyword>
<keyword id="KW-1015">Disulfide bond</keyword>
<keyword id="KW-0872">Ion channel impairing toxin</keyword>
<keyword id="KW-0528">Neurotoxin</keyword>
<keyword id="KW-0632">Potassium channel impairing toxin</keyword>
<keyword id="KW-0964">Secreted</keyword>
<keyword id="KW-0732">Signal</keyword>
<keyword id="KW-0800">Toxin</keyword>
<keyword id="KW-1220">Voltage-gated potassium channel impairing toxin</keyword>
<accession>O46028</accession>
<feature type="signal peptide" evidence="1">
    <location>
        <begin position="1"/>
        <end position="22"/>
    </location>
</feature>
<feature type="propeptide" id="PRO_0000232655" evidence="7">
    <location>
        <begin position="23"/>
        <end position="28"/>
    </location>
</feature>
<feature type="chain" id="PRO_0000035327" description="Potassium channel toxin alpha-KTx 10.1" evidence="3">
    <location>
        <begin position="29"/>
        <end position="60"/>
    </location>
</feature>
<feature type="site" description="Important for the interaction with Kv1.2/KCNA2 channel" evidence="6">
    <location>
        <position position="34"/>
    </location>
</feature>
<feature type="site" description="Important for the interaction with Kv1.2/KCNA2 channel" evidence="6">
    <location>
        <position position="38"/>
    </location>
</feature>
<feature type="site" description="Important for the interaction with Kv1.2/KCNA2 channel" evidence="6">
    <location>
        <position position="42"/>
    </location>
</feature>
<feature type="site" description="Important for the interaction with Kv1.2/KCNA2 channel" evidence="6">
    <location>
        <position position="46"/>
    </location>
</feature>
<feature type="site" description="Basic residue of the functional dyad, important for the interaction with Kv1.2/KCNA2 channel" evidence="6">
    <location>
        <position position="49"/>
    </location>
</feature>
<feature type="site" description="Important for the interaction with Kv1.2/KCNA2 channel" evidence="6">
    <location>
        <position position="51"/>
    </location>
</feature>
<feature type="site" description="Important for the interaction with Kv1.2/KCNA2 channel" evidence="6">
    <location>
        <position position="52"/>
    </location>
</feature>
<feature type="site" description="Important for the interaction with Kv1.2/KCNA2 channel" evidence="6">
    <location>
        <position position="56"/>
    </location>
</feature>
<feature type="site" description="Aromatic residue of the functional dyad, important for the interaction with Kv1.2/KCNA2 channel" evidence="6">
    <location>
        <position position="58"/>
    </location>
</feature>
<feature type="modified residue" description="Tyrosine amide" evidence="3">
    <location>
        <position position="60"/>
    </location>
</feature>
<feature type="disulfide bond" evidence="2 8">
    <location>
        <begin position="31"/>
        <end position="50"/>
    </location>
</feature>
<feature type="disulfide bond" evidence="2 8">
    <location>
        <begin position="36"/>
        <end position="55"/>
    </location>
</feature>
<feature type="disulfide bond" evidence="2 8">
    <location>
        <begin position="40"/>
        <end position="57"/>
    </location>
</feature>
<feature type="mutagenesis site" description="Increases the toxicity (LD(50)=15 ug/kg). Inhibits KCNN with the same intensity. Inhibits more efficiently KCNN4, Sh KCNA1, KCNA2, and KCNA3." evidence="2">
    <original>TCD</original>
    <variation>PCQ</variation>
    <location>
        <begin position="35"/>
        <end position="37"/>
    </location>
</feature>
<feature type="helix" evidence="9">
    <location>
        <begin position="33"/>
        <end position="41"/>
    </location>
</feature>
<feature type="turn" evidence="9">
    <location>
        <begin position="42"/>
        <end position="44"/>
    </location>
</feature>
<feature type="strand" evidence="9">
    <location>
        <begin position="45"/>
        <end position="51"/>
    </location>
</feature>
<feature type="strand" evidence="9">
    <location>
        <begin position="54"/>
        <end position="58"/>
    </location>
</feature>
<comment type="function">
    <text evidence="2 3">Blocks Shaker B (Sh) and voltage-gated potassium-channels Kv1.1/KCNA1, Kv1.2/KCNA2, Kv1.3/KCNA3. Also inhibits small conductance calcium-activated potassium channels (KCNN) and intermediate conductance calcium-activated potassium channel (KCa3.1/KCNN4).</text>
</comment>
<comment type="subcellular location">
    <subcellularLocation>
        <location evidence="2 3">Secreted</location>
    </subcellularLocation>
</comment>
<comment type="tissue specificity">
    <text evidence="6 7">Expressed by the venom gland.</text>
</comment>
<comment type="domain">
    <text>Has the structural arrangement of an alpha-helix connected to a beta-sheet by disulfide bonds (CSalpha/beta).</text>
</comment>
<comment type="toxic dose">
    <text evidence="2">LD(50) is 25 ug/kg by intracerebroventricular injection into mice.</text>
</comment>
<comment type="miscellaneous">
    <text evidence="6">Negative results: does not inhibit Kv1.5/KCNA5 and Kv3.1/KCNC1.</text>
</comment>
<comment type="similarity">
    <text evidence="5">Belongs to the short scorpion toxin superfamily. Potassium channel inhibitor family. Alpha-KTx 10 subfamily.</text>
</comment>
<reference key="1">
    <citation type="journal article" date="1998" name="Eur. J. Biochem.">
        <title>Cobatoxins 1 and 2 from Centruroides noxius Hoffmann constitute a new subfamily of potassium-channel-blocking scorpion toxins.</title>
        <authorList>
            <person name="Selisko B."/>
            <person name="Garcia C."/>
            <person name="Becerril B."/>
            <person name="Gomez-Lagunas F."/>
            <person name="Garay C."/>
            <person name="Possani L.D."/>
        </authorList>
    </citation>
    <scope>NUCLEOTIDE SEQUENCE [MRNA]</scope>
    <scope>PROTEIN SEQUENCE OF 29-60</scope>
    <scope>FUNCTION</scope>
    <scope>SUBCELLULAR LOCATION</scope>
    <scope>AMIDATION AT TYR-60</scope>
    <source>
        <tissue>Venom</tissue>
        <tissue>Venom gland</tissue>
    </source>
</reference>
<reference key="2">
    <citation type="journal article" date="2004" name="Biochem. J.">
        <title>Cobatoxin 1 from Centruroides noxius scorpion venom: chemical synthesis, three-dimensional structure in solution, pharmacology and docking on K+ channels.</title>
        <authorList>
            <person name="Jouirou B."/>
            <person name="Mosbah A."/>
            <person name="Visan V."/>
            <person name="Grissmer S."/>
            <person name="M'Barek S."/>
            <person name="Fajloun Z."/>
            <person name="Van Rietschoten J."/>
            <person name="Devaux C."/>
            <person name="Rochat H."/>
            <person name="Lippens G."/>
            <person name="El Ayeb M."/>
            <person name="De Waard M."/>
            <person name="Mabrouk K."/>
            <person name="Sabatier J.-M."/>
        </authorList>
    </citation>
    <scope>STRUCTURE BY NMR OF 29-60</scope>
    <scope>FUNCTION</scope>
    <scope>DISULFIDE BONDS</scope>
    <scope>SUBCELLULAR LOCATION</scope>
    <scope>TOXIC DOSE</scope>
    <scope>SYNTHESIS OF 29-60</scope>
    <scope>MUTAGENESIS OF 35-THR--ASP-37</scope>
    <scope>CHANNEL-TOXIN INTERACTION MODELING</scope>
    <source>
        <tissue>Venom</tissue>
    </source>
</reference>
<dbReference type="EMBL" id="AJ224689">
    <property type="protein sequence ID" value="CAA12073.1"/>
    <property type="molecule type" value="mRNA"/>
</dbReference>
<dbReference type="PDB" id="1PJV">
    <property type="method" value="NMR"/>
    <property type="chains" value="A=29-60"/>
</dbReference>
<dbReference type="PDBsum" id="1PJV"/>
<dbReference type="SMR" id="O46028"/>
<dbReference type="EvolutionaryTrace" id="O46028"/>
<dbReference type="GO" id="GO:0005576">
    <property type="term" value="C:extracellular region"/>
    <property type="evidence" value="ECO:0007669"/>
    <property type="project" value="UniProtKB-SubCell"/>
</dbReference>
<dbReference type="GO" id="GO:0015459">
    <property type="term" value="F:potassium channel regulator activity"/>
    <property type="evidence" value="ECO:0007669"/>
    <property type="project" value="UniProtKB-KW"/>
</dbReference>
<dbReference type="GO" id="GO:0090729">
    <property type="term" value="F:toxin activity"/>
    <property type="evidence" value="ECO:0007669"/>
    <property type="project" value="UniProtKB-KW"/>
</dbReference>
<dbReference type="Gene3D" id="3.30.30.10">
    <property type="entry name" value="Knottin, scorpion toxin-like"/>
    <property type="match status" value="1"/>
</dbReference>
<dbReference type="InterPro" id="IPR036574">
    <property type="entry name" value="Scorpion_toxin-like_sf"/>
</dbReference>
<dbReference type="SUPFAM" id="SSF57095">
    <property type="entry name" value="Scorpion toxin-like"/>
    <property type="match status" value="1"/>
</dbReference>
<dbReference type="PROSITE" id="PS01138">
    <property type="entry name" value="SCORP_SHORT_TOXIN"/>
    <property type="match status" value="1"/>
</dbReference>
<proteinExistence type="evidence at protein level"/>
<protein>
    <recommendedName>
        <fullName>Potassium channel toxin alpha-KTx 10.1</fullName>
    </recommendedName>
    <alternativeName>
        <fullName evidence="4">Cobatoxin-1</fullName>
        <shortName evidence="4">CoTx1</shortName>
    </alternativeName>
    <alternativeName>
        <fullName>gtIX</fullName>
    </alternativeName>
</protein>
<sequence>MEGIAKITLILLFLFVTMHTFANWNTEAAVCVYRTCDKDCKRRGYRSGKCINNACKCYPYGK</sequence>
<name>KA101_CENNO</name>
<evidence type="ECO:0000255" key="1"/>
<evidence type="ECO:0000269" key="2">
    <source>
    </source>
</evidence>
<evidence type="ECO:0000269" key="3">
    <source>
    </source>
</evidence>
<evidence type="ECO:0000303" key="4">
    <source>
    </source>
</evidence>
<evidence type="ECO:0000305" key="5"/>
<evidence type="ECO:0000305" key="6">
    <source>
    </source>
</evidence>
<evidence type="ECO:0000305" key="7">
    <source>
    </source>
</evidence>
<evidence type="ECO:0007744" key="8">
    <source>
        <dbReference type="PDB" id="1PJV"/>
    </source>
</evidence>
<evidence type="ECO:0007829" key="9">
    <source>
        <dbReference type="PDB" id="1PJV"/>
    </source>
</evidence>